<gene>
    <name evidence="1" type="primary">infA2</name>
    <name type="ordered locus">Bcep18194_A3468</name>
</gene>
<feature type="chain" id="PRO_0000263776" description="Translation initiation factor IF-1 2">
    <location>
        <begin position="1"/>
        <end position="72"/>
    </location>
</feature>
<feature type="domain" description="S1-like" evidence="1">
    <location>
        <begin position="1"/>
        <end position="72"/>
    </location>
</feature>
<name>IF12_BURL3</name>
<proteinExistence type="inferred from homology"/>
<sequence length="72" mass="8218">MAKDDVIQMQGEVIENLPNATFRVKLENGHVVLGHISGKMRMHYIRILPGDKVTVELTPYDLSRARIVFRAK</sequence>
<reference key="1">
    <citation type="submission" date="2005-10" db="EMBL/GenBank/DDBJ databases">
        <title>Complete sequence of chromosome 1 of Burkholderia sp. 383.</title>
        <authorList>
            <consortium name="US DOE Joint Genome Institute"/>
            <person name="Copeland A."/>
            <person name="Lucas S."/>
            <person name="Lapidus A."/>
            <person name="Barry K."/>
            <person name="Detter J.C."/>
            <person name="Glavina T."/>
            <person name="Hammon N."/>
            <person name="Israni S."/>
            <person name="Pitluck S."/>
            <person name="Chain P."/>
            <person name="Malfatti S."/>
            <person name="Shin M."/>
            <person name="Vergez L."/>
            <person name="Schmutz J."/>
            <person name="Larimer F."/>
            <person name="Land M."/>
            <person name="Kyrpides N."/>
            <person name="Lykidis A."/>
            <person name="Richardson P."/>
        </authorList>
    </citation>
    <scope>NUCLEOTIDE SEQUENCE [LARGE SCALE GENOMIC DNA]</scope>
    <source>
        <strain>ATCC 17760 / DSM 23089 / LMG 22485 / NCIMB 9086 / R18194 / 383</strain>
    </source>
</reference>
<dbReference type="EMBL" id="CP000151">
    <property type="protein sequence ID" value="ABB07070.1"/>
    <property type="molecule type" value="Genomic_DNA"/>
</dbReference>
<dbReference type="SMR" id="Q39KE6"/>
<dbReference type="KEGG" id="bur:Bcep18194_A3468"/>
<dbReference type="HOGENOM" id="CLU_151267_1_0_4"/>
<dbReference type="Proteomes" id="UP000002705">
    <property type="component" value="Chromosome 1"/>
</dbReference>
<dbReference type="GO" id="GO:0005829">
    <property type="term" value="C:cytosol"/>
    <property type="evidence" value="ECO:0007669"/>
    <property type="project" value="TreeGrafter"/>
</dbReference>
<dbReference type="GO" id="GO:0043022">
    <property type="term" value="F:ribosome binding"/>
    <property type="evidence" value="ECO:0007669"/>
    <property type="project" value="UniProtKB-UniRule"/>
</dbReference>
<dbReference type="GO" id="GO:0019843">
    <property type="term" value="F:rRNA binding"/>
    <property type="evidence" value="ECO:0007669"/>
    <property type="project" value="UniProtKB-UniRule"/>
</dbReference>
<dbReference type="GO" id="GO:0003743">
    <property type="term" value="F:translation initiation factor activity"/>
    <property type="evidence" value="ECO:0007669"/>
    <property type="project" value="UniProtKB-UniRule"/>
</dbReference>
<dbReference type="CDD" id="cd04451">
    <property type="entry name" value="S1_IF1"/>
    <property type="match status" value="1"/>
</dbReference>
<dbReference type="FunFam" id="2.40.50.140:FF:000002">
    <property type="entry name" value="Translation initiation factor IF-1"/>
    <property type="match status" value="1"/>
</dbReference>
<dbReference type="Gene3D" id="2.40.50.140">
    <property type="entry name" value="Nucleic acid-binding proteins"/>
    <property type="match status" value="1"/>
</dbReference>
<dbReference type="HAMAP" id="MF_00075">
    <property type="entry name" value="IF_1"/>
    <property type="match status" value="1"/>
</dbReference>
<dbReference type="InterPro" id="IPR012340">
    <property type="entry name" value="NA-bd_OB-fold"/>
</dbReference>
<dbReference type="InterPro" id="IPR006196">
    <property type="entry name" value="RNA-binding_domain_S1_IF1"/>
</dbReference>
<dbReference type="InterPro" id="IPR003029">
    <property type="entry name" value="S1_domain"/>
</dbReference>
<dbReference type="InterPro" id="IPR004368">
    <property type="entry name" value="TIF_IF1"/>
</dbReference>
<dbReference type="NCBIfam" id="TIGR00008">
    <property type="entry name" value="infA"/>
    <property type="match status" value="1"/>
</dbReference>
<dbReference type="PANTHER" id="PTHR33370">
    <property type="entry name" value="TRANSLATION INITIATION FACTOR IF-1, CHLOROPLASTIC"/>
    <property type="match status" value="1"/>
</dbReference>
<dbReference type="PANTHER" id="PTHR33370:SF1">
    <property type="entry name" value="TRANSLATION INITIATION FACTOR IF-1, CHLOROPLASTIC"/>
    <property type="match status" value="1"/>
</dbReference>
<dbReference type="Pfam" id="PF01176">
    <property type="entry name" value="eIF-1a"/>
    <property type="match status" value="1"/>
</dbReference>
<dbReference type="SMART" id="SM00316">
    <property type="entry name" value="S1"/>
    <property type="match status" value="1"/>
</dbReference>
<dbReference type="SUPFAM" id="SSF50249">
    <property type="entry name" value="Nucleic acid-binding proteins"/>
    <property type="match status" value="1"/>
</dbReference>
<dbReference type="PROSITE" id="PS50832">
    <property type="entry name" value="S1_IF1_TYPE"/>
    <property type="match status" value="1"/>
</dbReference>
<organism>
    <name type="scientific">Burkholderia lata (strain ATCC 17760 / DSM 23089 / LMG 22485 / NCIMB 9086 / R18194 / 383)</name>
    <dbReference type="NCBI Taxonomy" id="482957"/>
    <lineage>
        <taxon>Bacteria</taxon>
        <taxon>Pseudomonadati</taxon>
        <taxon>Pseudomonadota</taxon>
        <taxon>Betaproteobacteria</taxon>
        <taxon>Burkholderiales</taxon>
        <taxon>Burkholderiaceae</taxon>
        <taxon>Burkholderia</taxon>
        <taxon>Burkholderia cepacia complex</taxon>
    </lineage>
</organism>
<accession>Q39KE6</accession>
<keyword id="KW-0963">Cytoplasm</keyword>
<keyword id="KW-0396">Initiation factor</keyword>
<keyword id="KW-0648">Protein biosynthesis</keyword>
<keyword id="KW-0694">RNA-binding</keyword>
<keyword id="KW-0699">rRNA-binding</keyword>
<evidence type="ECO:0000255" key="1">
    <source>
        <dbReference type="HAMAP-Rule" id="MF_00075"/>
    </source>
</evidence>
<comment type="function">
    <text evidence="1">One of the essential components for the initiation of protein synthesis. Stabilizes the binding of IF-2 and IF-3 on the 30S subunit to which N-formylmethionyl-tRNA(fMet) subsequently binds. Helps modulate mRNA selection, yielding the 30S pre-initiation complex (PIC). Upon addition of the 50S ribosomal subunit IF-1, IF-2 and IF-3 are released leaving the mature 70S translation initiation complex.</text>
</comment>
<comment type="subunit">
    <text evidence="1">Component of the 30S ribosomal translation pre-initiation complex which assembles on the 30S ribosome in the order IF-2 and IF-3, IF-1 and N-formylmethionyl-tRNA(fMet); mRNA recruitment can occur at any time during PIC assembly.</text>
</comment>
<comment type="subcellular location">
    <subcellularLocation>
        <location evidence="1">Cytoplasm</location>
    </subcellularLocation>
</comment>
<comment type="similarity">
    <text evidence="1">Belongs to the IF-1 family.</text>
</comment>
<protein>
    <recommendedName>
        <fullName evidence="1">Translation initiation factor IF-1 2</fullName>
    </recommendedName>
</protein>